<keyword id="KW-0472">Membrane</keyword>
<keyword id="KW-0496">Mitochondrion</keyword>
<keyword id="KW-0999">Mitochondrion inner membrane</keyword>
<keyword id="KW-1185">Reference proteome</keyword>
<keyword id="KW-0809">Transit peptide</keyword>
<comment type="function">
    <text evidence="1">Probable mitochondrial mRNA stabilization factor.</text>
</comment>
<comment type="subcellular location">
    <subcellularLocation>
        <location evidence="1">Mitochondrion inner membrane</location>
        <topology evidence="1">Peripheral membrane protein</topology>
        <orientation evidence="1">Matrix side</orientation>
    </subcellularLocation>
</comment>
<comment type="similarity">
    <text evidence="4">Belongs to the ATP25 family.</text>
</comment>
<organism>
    <name type="scientific">Uncinocarpus reesii (strain UAMH 1704)</name>
    <dbReference type="NCBI Taxonomy" id="336963"/>
    <lineage>
        <taxon>Eukaryota</taxon>
        <taxon>Fungi</taxon>
        <taxon>Dikarya</taxon>
        <taxon>Ascomycota</taxon>
        <taxon>Pezizomycotina</taxon>
        <taxon>Eurotiomycetes</taxon>
        <taxon>Eurotiomycetidae</taxon>
        <taxon>Onygenales</taxon>
        <taxon>Onygenaceae</taxon>
        <taxon>Uncinocarpus</taxon>
    </lineage>
</organism>
<feature type="transit peptide" description="Mitochondrion" evidence="2">
    <location>
        <begin position="1"/>
        <end position="60"/>
    </location>
</feature>
<feature type="chain" id="PRO_0000404489" description="ATPase synthesis protein 25, mitochondrial">
    <location>
        <begin position="61"/>
        <end position="729"/>
    </location>
</feature>
<feature type="region of interest" description="Disordered" evidence="3">
    <location>
        <begin position="50"/>
        <end position="90"/>
    </location>
</feature>
<feature type="region of interest" description="Disordered" evidence="3">
    <location>
        <begin position="100"/>
        <end position="119"/>
    </location>
</feature>
<feature type="region of interest" description="Disordered" evidence="3">
    <location>
        <begin position="320"/>
        <end position="343"/>
    </location>
</feature>
<feature type="compositionally biased region" description="Polar residues" evidence="3">
    <location>
        <begin position="59"/>
        <end position="70"/>
    </location>
</feature>
<dbReference type="EMBL" id="CH476617">
    <property type="protein sequence ID" value="EEP80021.1"/>
    <property type="molecule type" value="Genomic_DNA"/>
</dbReference>
<dbReference type="RefSeq" id="XP_002584174.1">
    <property type="nucleotide sequence ID" value="XM_002584128.1"/>
</dbReference>
<dbReference type="SMR" id="C4JUR0"/>
<dbReference type="STRING" id="336963.C4JUR0"/>
<dbReference type="GeneID" id="8441174"/>
<dbReference type="KEGG" id="ure:UREG_04863"/>
<dbReference type="VEuPathDB" id="FungiDB:UREG_04863"/>
<dbReference type="eggNOG" id="ENOG502S5IB">
    <property type="taxonomic scope" value="Eukaryota"/>
</dbReference>
<dbReference type="HOGENOM" id="CLU_016140_0_0_1"/>
<dbReference type="InParanoid" id="C4JUR0"/>
<dbReference type="OMA" id="CLSSWVP"/>
<dbReference type="OrthoDB" id="107372at2759"/>
<dbReference type="Proteomes" id="UP000002058">
    <property type="component" value="Unassembled WGS sequence"/>
</dbReference>
<dbReference type="GO" id="GO:0005743">
    <property type="term" value="C:mitochondrial inner membrane"/>
    <property type="evidence" value="ECO:0007669"/>
    <property type="project" value="UniProtKB-SubCell"/>
</dbReference>
<dbReference type="GO" id="GO:0140053">
    <property type="term" value="P:mitochondrial gene expression"/>
    <property type="evidence" value="ECO:0007669"/>
    <property type="project" value="InterPro"/>
</dbReference>
<dbReference type="GO" id="GO:0048255">
    <property type="term" value="P:mRNA stabilization"/>
    <property type="evidence" value="ECO:0007669"/>
    <property type="project" value="TreeGrafter"/>
</dbReference>
<dbReference type="FunFam" id="3.30.460.10:FF:000044">
    <property type="entry name" value="ATPase synthesis protein 25, mitochondrial"/>
    <property type="match status" value="1"/>
</dbReference>
<dbReference type="Gene3D" id="3.30.460.10">
    <property type="entry name" value="Beta Polymerase, domain 2"/>
    <property type="match status" value="1"/>
</dbReference>
<dbReference type="InterPro" id="IPR040152">
    <property type="entry name" value="Atp25"/>
</dbReference>
<dbReference type="InterPro" id="IPR043519">
    <property type="entry name" value="NT_sf"/>
</dbReference>
<dbReference type="PANTHER" id="PTHR28087">
    <property type="entry name" value="ATPASE SYNTHESIS PROTEIN 25, MITOCHONDRIAL"/>
    <property type="match status" value="1"/>
</dbReference>
<dbReference type="PANTHER" id="PTHR28087:SF1">
    <property type="entry name" value="ATPASE SYNTHESIS PROTEIN 25, MITOCHONDRIAL"/>
    <property type="match status" value="1"/>
</dbReference>
<dbReference type="Pfam" id="PF02410">
    <property type="entry name" value="RsfS"/>
    <property type="match status" value="1"/>
</dbReference>
<protein>
    <recommendedName>
        <fullName>ATPase synthesis protein 25, mitochondrial</fullName>
    </recommendedName>
</protein>
<proteinExistence type="inferred from homology"/>
<gene>
    <name type="primary">ATP25</name>
    <name type="ORF">UREG_04863</name>
</gene>
<reference key="1">
    <citation type="journal article" date="2009" name="Genome Res.">
        <title>Comparative genomic analyses of the human fungal pathogens Coccidioides and their relatives.</title>
        <authorList>
            <person name="Sharpton T.J."/>
            <person name="Stajich J.E."/>
            <person name="Rounsley S.D."/>
            <person name="Gardner M.J."/>
            <person name="Wortman J.R."/>
            <person name="Jordar V.S."/>
            <person name="Maiti R."/>
            <person name="Kodira C.D."/>
            <person name="Neafsey D.E."/>
            <person name="Zeng Q."/>
            <person name="Hung C.-Y."/>
            <person name="McMahan C."/>
            <person name="Muszewska A."/>
            <person name="Grynberg M."/>
            <person name="Mandel M.A."/>
            <person name="Kellner E.M."/>
            <person name="Barker B.M."/>
            <person name="Galgiani J.N."/>
            <person name="Orbach M.J."/>
            <person name="Kirkland T.N."/>
            <person name="Cole G.T."/>
            <person name="Henn M.R."/>
            <person name="Birren B.W."/>
            <person name="Taylor J.W."/>
        </authorList>
    </citation>
    <scope>NUCLEOTIDE SEQUENCE [LARGE SCALE GENOMIC DNA]</scope>
    <source>
        <strain>UAMH 1704</strain>
    </source>
</reference>
<name>ATP25_UNCRE</name>
<evidence type="ECO:0000250" key="1"/>
<evidence type="ECO:0000255" key="2"/>
<evidence type="ECO:0000256" key="3">
    <source>
        <dbReference type="SAM" id="MobiDB-lite"/>
    </source>
</evidence>
<evidence type="ECO:0000305" key="4"/>
<accession>C4JUR0</accession>
<sequence>MNRIMLRGIQCYGCRSHVIQSFLAIADITFPAPLYHKPYTRSHLQHQSSFSSLHGQSFRGQSVAHSTSSRDPLEDNGTEQHPDSASHQSNEHVPWYLREESSEVPPHPLGSRQSIPPLPDNPPPILEGLLQHISVDIGLDDLSLLDLRSRNPPPALGANLIMIIGTARSVKHLNVAADRLCRWLRSTHKLHPTADGLLGRNELKIKLRRKARRAKLSSNAGSAFDEKDDGIITGWICVNVGSVENGKAAATEQKQDFVGFGSVADGAQIVVQMLTEEKRAELDLEGLWSGNFPPRSASEIRMFEQHFEAFAEKAVAEAANGRAAHRDPRGVRGTGSGMDHGQRRGLHTIRRVPNISVEAAVLGPAFIPRQGATVQQEPRLGPAPSVPPKASKPLNLSPETASLLHHLTQVPKDDAIRELGSGPQDLTSTLFLRLFQEALSNAEQNPDAHILAKLELIRVAVTLQHPHYSKTDLFDAFKEFAASGYDISESQALKTVKALLSFAENDPDGSHTAKRVSRSDIDLALKVLNHMSLRGMDILSREVFSMLYTASGFQVPVRPVNENPSPSSIETETSIPVSAEEFDEVRLVQDRLRKIMDAFDVKFGPDQFLTLLRFHFHHGNYDQFWAIWRKMSLLQLPRSKEFYVLLFRLHAERGNQKRAAECLSSWVPMMAREQPAVAIDADVARVIMACLLVADPDVKQRADNGDPGEYPSLWDRCWNVLVASKATQG</sequence>